<organism>
    <name type="scientific">Xanthomonas euvesicatoria pv. vesicatoria (strain 85-10)</name>
    <name type="common">Xanthomonas campestris pv. vesicatoria</name>
    <dbReference type="NCBI Taxonomy" id="316273"/>
    <lineage>
        <taxon>Bacteria</taxon>
        <taxon>Pseudomonadati</taxon>
        <taxon>Pseudomonadota</taxon>
        <taxon>Gammaproteobacteria</taxon>
        <taxon>Lysobacterales</taxon>
        <taxon>Lysobacteraceae</taxon>
        <taxon>Xanthomonas</taxon>
    </lineage>
</organism>
<proteinExistence type="inferred from homology"/>
<feature type="chain" id="PRO_1000024700" description="ATP-dependent Clp protease ATP-binding subunit ClpX">
    <location>
        <begin position="1"/>
        <end position="428"/>
    </location>
</feature>
<feature type="domain" description="ClpX-type ZB" evidence="2">
    <location>
        <begin position="6"/>
        <end position="59"/>
    </location>
</feature>
<feature type="binding site" evidence="2">
    <location>
        <position position="18"/>
    </location>
    <ligand>
        <name>Zn(2+)</name>
        <dbReference type="ChEBI" id="CHEBI:29105"/>
    </ligand>
</feature>
<feature type="binding site" evidence="2">
    <location>
        <position position="21"/>
    </location>
    <ligand>
        <name>Zn(2+)</name>
        <dbReference type="ChEBI" id="CHEBI:29105"/>
    </ligand>
</feature>
<feature type="binding site" evidence="2">
    <location>
        <position position="40"/>
    </location>
    <ligand>
        <name>Zn(2+)</name>
        <dbReference type="ChEBI" id="CHEBI:29105"/>
    </ligand>
</feature>
<feature type="binding site" evidence="2">
    <location>
        <position position="43"/>
    </location>
    <ligand>
        <name>Zn(2+)</name>
        <dbReference type="ChEBI" id="CHEBI:29105"/>
    </ligand>
</feature>
<feature type="binding site" evidence="1">
    <location>
        <begin position="122"/>
        <end position="129"/>
    </location>
    <ligand>
        <name>ATP</name>
        <dbReference type="ChEBI" id="CHEBI:30616"/>
    </ligand>
</feature>
<keyword id="KW-0067">ATP-binding</keyword>
<keyword id="KW-0143">Chaperone</keyword>
<keyword id="KW-0479">Metal-binding</keyword>
<keyword id="KW-0547">Nucleotide-binding</keyword>
<keyword id="KW-0862">Zinc</keyword>
<evidence type="ECO:0000255" key="1">
    <source>
        <dbReference type="HAMAP-Rule" id="MF_00175"/>
    </source>
</evidence>
<evidence type="ECO:0000255" key="2">
    <source>
        <dbReference type="PROSITE-ProRule" id="PRU01250"/>
    </source>
</evidence>
<name>CLPX_XANE5</name>
<reference key="1">
    <citation type="journal article" date="2005" name="J. Bacteriol.">
        <title>Insights into genome plasticity and pathogenicity of the plant pathogenic Bacterium Xanthomonas campestris pv. vesicatoria revealed by the complete genome sequence.</title>
        <authorList>
            <person name="Thieme F."/>
            <person name="Koebnik R."/>
            <person name="Bekel T."/>
            <person name="Berger C."/>
            <person name="Boch J."/>
            <person name="Buettner D."/>
            <person name="Caldana C."/>
            <person name="Gaigalat L."/>
            <person name="Goesmann A."/>
            <person name="Kay S."/>
            <person name="Kirchner O."/>
            <person name="Lanz C."/>
            <person name="Linke B."/>
            <person name="McHardy A.C."/>
            <person name="Meyer F."/>
            <person name="Mittenhuber G."/>
            <person name="Nies D.H."/>
            <person name="Niesbach-Kloesgen U."/>
            <person name="Patschkowski T."/>
            <person name="Rueckert C."/>
            <person name="Rupp O."/>
            <person name="Schneiker S."/>
            <person name="Schuster S.C."/>
            <person name="Vorhoelter F.J."/>
            <person name="Weber E."/>
            <person name="Puehler A."/>
            <person name="Bonas U."/>
            <person name="Bartels D."/>
            <person name="Kaiser O."/>
        </authorList>
    </citation>
    <scope>NUCLEOTIDE SEQUENCE [LARGE SCALE GENOMIC DNA]</scope>
    <source>
        <strain>85-10</strain>
    </source>
</reference>
<accession>Q3BWQ0</accession>
<protein>
    <recommendedName>
        <fullName evidence="1">ATP-dependent Clp protease ATP-binding subunit ClpX</fullName>
    </recommendedName>
</protein>
<dbReference type="EMBL" id="AM039952">
    <property type="protein sequence ID" value="CAJ22713.1"/>
    <property type="molecule type" value="Genomic_DNA"/>
</dbReference>
<dbReference type="RefSeq" id="WP_003483788.1">
    <property type="nucleotide sequence ID" value="NZ_CP017190.1"/>
</dbReference>
<dbReference type="SMR" id="Q3BWQ0"/>
<dbReference type="STRING" id="456327.BJD11_17295"/>
<dbReference type="GeneID" id="97509418"/>
<dbReference type="KEGG" id="xcv:XCV1082"/>
<dbReference type="eggNOG" id="COG1219">
    <property type="taxonomic scope" value="Bacteria"/>
</dbReference>
<dbReference type="HOGENOM" id="CLU_014218_8_2_6"/>
<dbReference type="Proteomes" id="UP000007069">
    <property type="component" value="Chromosome"/>
</dbReference>
<dbReference type="GO" id="GO:0009376">
    <property type="term" value="C:HslUV protease complex"/>
    <property type="evidence" value="ECO:0007669"/>
    <property type="project" value="TreeGrafter"/>
</dbReference>
<dbReference type="GO" id="GO:0005524">
    <property type="term" value="F:ATP binding"/>
    <property type="evidence" value="ECO:0007669"/>
    <property type="project" value="UniProtKB-UniRule"/>
</dbReference>
<dbReference type="GO" id="GO:0016887">
    <property type="term" value="F:ATP hydrolysis activity"/>
    <property type="evidence" value="ECO:0007669"/>
    <property type="project" value="InterPro"/>
</dbReference>
<dbReference type="GO" id="GO:0140662">
    <property type="term" value="F:ATP-dependent protein folding chaperone"/>
    <property type="evidence" value="ECO:0007669"/>
    <property type="project" value="InterPro"/>
</dbReference>
<dbReference type="GO" id="GO:0046983">
    <property type="term" value="F:protein dimerization activity"/>
    <property type="evidence" value="ECO:0007669"/>
    <property type="project" value="InterPro"/>
</dbReference>
<dbReference type="GO" id="GO:0051082">
    <property type="term" value="F:unfolded protein binding"/>
    <property type="evidence" value="ECO:0007669"/>
    <property type="project" value="UniProtKB-UniRule"/>
</dbReference>
<dbReference type="GO" id="GO:0008270">
    <property type="term" value="F:zinc ion binding"/>
    <property type="evidence" value="ECO:0007669"/>
    <property type="project" value="InterPro"/>
</dbReference>
<dbReference type="GO" id="GO:0051301">
    <property type="term" value="P:cell division"/>
    <property type="evidence" value="ECO:0007669"/>
    <property type="project" value="TreeGrafter"/>
</dbReference>
<dbReference type="GO" id="GO:0051603">
    <property type="term" value="P:proteolysis involved in protein catabolic process"/>
    <property type="evidence" value="ECO:0007669"/>
    <property type="project" value="TreeGrafter"/>
</dbReference>
<dbReference type="CDD" id="cd19497">
    <property type="entry name" value="RecA-like_ClpX"/>
    <property type="match status" value="1"/>
</dbReference>
<dbReference type="FunFam" id="1.10.8.60:FF:000002">
    <property type="entry name" value="ATP-dependent Clp protease ATP-binding subunit ClpX"/>
    <property type="match status" value="1"/>
</dbReference>
<dbReference type="FunFam" id="3.40.50.300:FF:000005">
    <property type="entry name" value="ATP-dependent Clp protease ATP-binding subunit ClpX"/>
    <property type="match status" value="1"/>
</dbReference>
<dbReference type="Gene3D" id="1.10.8.60">
    <property type="match status" value="1"/>
</dbReference>
<dbReference type="Gene3D" id="6.20.220.10">
    <property type="entry name" value="ClpX chaperone, C4-type zinc finger domain"/>
    <property type="match status" value="1"/>
</dbReference>
<dbReference type="Gene3D" id="3.40.50.300">
    <property type="entry name" value="P-loop containing nucleotide triphosphate hydrolases"/>
    <property type="match status" value="1"/>
</dbReference>
<dbReference type="HAMAP" id="MF_00175">
    <property type="entry name" value="ClpX"/>
    <property type="match status" value="1"/>
</dbReference>
<dbReference type="InterPro" id="IPR003593">
    <property type="entry name" value="AAA+_ATPase"/>
</dbReference>
<dbReference type="InterPro" id="IPR050052">
    <property type="entry name" value="ATP-dep_Clp_protease_ClpX"/>
</dbReference>
<dbReference type="InterPro" id="IPR003959">
    <property type="entry name" value="ATPase_AAA_core"/>
</dbReference>
<dbReference type="InterPro" id="IPR019489">
    <property type="entry name" value="Clp_ATPase_C"/>
</dbReference>
<dbReference type="InterPro" id="IPR004487">
    <property type="entry name" value="Clp_protease_ATP-bd_su_ClpX"/>
</dbReference>
<dbReference type="InterPro" id="IPR046425">
    <property type="entry name" value="ClpX_bact"/>
</dbReference>
<dbReference type="InterPro" id="IPR027417">
    <property type="entry name" value="P-loop_NTPase"/>
</dbReference>
<dbReference type="InterPro" id="IPR010603">
    <property type="entry name" value="Znf_CppX_C4"/>
</dbReference>
<dbReference type="InterPro" id="IPR038366">
    <property type="entry name" value="Znf_CppX_C4_sf"/>
</dbReference>
<dbReference type="NCBIfam" id="TIGR00382">
    <property type="entry name" value="clpX"/>
    <property type="match status" value="1"/>
</dbReference>
<dbReference type="NCBIfam" id="NF003745">
    <property type="entry name" value="PRK05342.1"/>
    <property type="match status" value="1"/>
</dbReference>
<dbReference type="PANTHER" id="PTHR48102:SF7">
    <property type="entry name" value="ATP-DEPENDENT CLP PROTEASE ATP-BINDING SUBUNIT CLPX-LIKE, MITOCHONDRIAL"/>
    <property type="match status" value="1"/>
</dbReference>
<dbReference type="PANTHER" id="PTHR48102">
    <property type="entry name" value="ATP-DEPENDENT CLP PROTEASE ATP-BINDING SUBUNIT CLPX-LIKE, MITOCHONDRIAL-RELATED"/>
    <property type="match status" value="1"/>
</dbReference>
<dbReference type="Pfam" id="PF07724">
    <property type="entry name" value="AAA_2"/>
    <property type="match status" value="1"/>
</dbReference>
<dbReference type="Pfam" id="PF10431">
    <property type="entry name" value="ClpB_D2-small"/>
    <property type="match status" value="1"/>
</dbReference>
<dbReference type="Pfam" id="PF06689">
    <property type="entry name" value="zf-C4_ClpX"/>
    <property type="match status" value="1"/>
</dbReference>
<dbReference type="SMART" id="SM00382">
    <property type="entry name" value="AAA"/>
    <property type="match status" value="1"/>
</dbReference>
<dbReference type="SMART" id="SM01086">
    <property type="entry name" value="ClpB_D2-small"/>
    <property type="match status" value="1"/>
</dbReference>
<dbReference type="SMART" id="SM00994">
    <property type="entry name" value="zf-C4_ClpX"/>
    <property type="match status" value="1"/>
</dbReference>
<dbReference type="SUPFAM" id="SSF57716">
    <property type="entry name" value="Glucocorticoid receptor-like (DNA-binding domain)"/>
    <property type="match status" value="1"/>
</dbReference>
<dbReference type="SUPFAM" id="SSF52540">
    <property type="entry name" value="P-loop containing nucleoside triphosphate hydrolases"/>
    <property type="match status" value="1"/>
</dbReference>
<dbReference type="PROSITE" id="PS51902">
    <property type="entry name" value="CLPX_ZB"/>
    <property type="match status" value="1"/>
</dbReference>
<comment type="function">
    <text evidence="1">ATP-dependent specificity component of the Clp protease. It directs the protease to specific substrates. Can perform chaperone functions in the absence of ClpP.</text>
</comment>
<comment type="subunit">
    <text evidence="1">Component of the ClpX-ClpP complex. Forms a hexameric ring that, in the presence of ATP, binds to fourteen ClpP subunits assembled into a disk-like structure with a central cavity, resembling the structure of eukaryotic proteasomes.</text>
</comment>
<comment type="similarity">
    <text evidence="1">Belongs to the ClpX chaperone family.</text>
</comment>
<sequence>MSEDRQGRSGDSNKILYCSFCGKSQHEVRKLIAGPSVFICDECVELCNDIIREELEEKAQSARSSLPKPREILEVLDQYVIGQLRAKRTLAVAVYNHYKRIESRSKNDDVELAKSNILLVGPTGSGKTLLAETLARLLNVPFTIADATTLTEAGYVGEDVENIIQKLLQKCDYDVEKAQQGIVYIDEIDKISRKSENPSITRDVSGEGVQQALLKLIEGTVASVPPQGGRKHPQQEFLQVDTKNILFICGGAFAGLDKVIQQRSNDAGGIGFGAKVKSSERKQEVGKILAEVEPEDLIKFGLIPEFVGRLPVVATLEELDEPALIKILTEPKNAITKQFKKLFDMEGVELEFRPDALSAIAKKALKRKTGARGLRTIVESVLLDTMYELPSQENVSKVVVDESVIEHKSEPYLIYQAQPAPAKAASGD</sequence>
<gene>
    <name evidence="1" type="primary">clpX</name>
    <name type="ordered locus">XCV1082</name>
</gene>